<evidence type="ECO:0000255" key="1">
    <source>
        <dbReference type="HAMAP-Rule" id="MF_00120"/>
    </source>
</evidence>
<name>GATA_GRABC</name>
<feature type="chain" id="PRO_1000015836" description="Glutamyl-tRNA(Gln) amidotransferase subunit A">
    <location>
        <begin position="1"/>
        <end position="499"/>
    </location>
</feature>
<feature type="active site" description="Charge relay system" evidence="1">
    <location>
        <position position="79"/>
    </location>
</feature>
<feature type="active site" description="Charge relay system" evidence="1">
    <location>
        <position position="159"/>
    </location>
</feature>
<feature type="active site" description="Acyl-ester intermediate" evidence="1">
    <location>
        <position position="183"/>
    </location>
</feature>
<protein>
    <recommendedName>
        <fullName evidence="1">Glutamyl-tRNA(Gln) amidotransferase subunit A</fullName>
        <shortName evidence="1">Glu-ADT subunit A</shortName>
        <ecNumber evidence="1">6.3.5.7</ecNumber>
    </recommendedName>
</protein>
<proteinExistence type="inferred from homology"/>
<comment type="function">
    <text evidence="1">Allows the formation of correctly charged Gln-tRNA(Gln) through the transamidation of misacylated Glu-tRNA(Gln) in organisms which lack glutaminyl-tRNA synthetase. The reaction takes place in the presence of glutamine and ATP through an activated gamma-phospho-Glu-tRNA(Gln).</text>
</comment>
<comment type="catalytic activity">
    <reaction evidence="1">
        <text>L-glutamyl-tRNA(Gln) + L-glutamine + ATP + H2O = L-glutaminyl-tRNA(Gln) + L-glutamate + ADP + phosphate + H(+)</text>
        <dbReference type="Rhea" id="RHEA:17521"/>
        <dbReference type="Rhea" id="RHEA-COMP:9681"/>
        <dbReference type="Rhea" id="RHEA-COMP:9684"/>
        <dbReference type="ChEBI" id="CHEBI:15377"/>
        <dbReference type="ChEBI" id="CHEBI:15378"/>
        <dbReference type="ChEBI" id="CHEBI:29985"/>
        <dbReference type="ChEBI" id="CHEBI:30616"/>
        <dbReference type="ChEBI" id="CHEBI:43474"/>
        <dbReference type="ChEBI" id="CHEBI:58359"/>
        <dbReference type="ChEBI" id="CHEBI:78520"/>
        <dbReference type="ChEBI" id="CHEBI:78521"/>
        <dbReference type="ChEBI" id="CHEBI:456216"/>
        <dbReference type="EC" id="6.3.5.7"/>
    </reaction>
</comment>
<comment type="subunit">
    <text evidence="1">Heterotrimer of A, B and C subunits.</text>
</comment>
<comment type="similarity">
    <text evidence="1">Belongs to the amidase family. GatA subfamily.</text>
</comment>
<dbReference type="EC" id="6.3.5.7" evidence="1"/>
<dbReference type="EMBL" id="CP000394">
    <property type="protein sequence ID" value="ABI61850.1"/>
    <property type="molecule type" value="Genomic_DNA"/>
</dbReference>
<dbReference type="RefSeq" id="WP_011631659.1">
    <property type="nucleotide sequence ID" value="NC_008343.2"/>
</dbReference>
<dbReference type="SMR" id="Q0BTK2"/>
<dbReference type="STRING" id="391165.GbCGDNIH1_0952"/>
<dbReference type="KEGG" id="gbe:GbCGDNIH1_0952"/>
<dbReference type="eggNOG" id="COG0154">
    <property type="taxonomic scope" value="Bacteria"/>
</dbReference>
<dbReference type="HOGENOM" id="CLU_009600_0_3_5"/>
<dbReference type="OrthoDB" id="9811471at2"/>
<dbReference type="Proteomes" id="UP000001963">
    <property type="component" value="Chromosome"/>
</dbReference>
<dbReference type="GO" id="GO:0030956">
    <property type="term" value="C:glutamyl-tRNA(Gln) amidotransferase complex"/>
    <property type="evidence" value="ECO:0007669"/>
    <property type="project" value="InterPro"/>
</dbReference>
<dbReference type="GO" id="GO:0005524">
    <property type="term" value="F:ATP binding"/>
    <property type="evidence" value="ECO:0007669"/>
    <property type="project" value="UniProtKB-KW"/>
</dbReference>
<dbReference type="GO" id="GO:0050567">
    <property type="term" value="F:glutaminyl-tRNA synthase (glutamine-hydrolyzing) activity"/>
    <property type="evidence" value="ECO:0007669"/>
    <property type="project" value="UniProtKB-UniRule"/>
</dbReference>
<dbReference type="GO" id="GO:0006412">
    <property type="term" value="P:translation"/>
    <property type="evidence" value="ECO:0007669"/>
    <property type="project" value="UniProtKB-UniRule"/>
</dbReference>
<dbReference type="Gene3D" id="3.90.1300.10">
    <property type="entry name" value="Amidase signature (AS) domain"/>
    <property type="match status" value="1"/>
</dbReference>
<dbReference type="HAMAP" id="MF_00120">
    <property type="entry name" value="GatA"/>
    <property type="match status" value="1"/>
</dbReference>
<dbReference type="InterPro" id="IPR000120">
    <property type="entry name" value="Amidase"/>
</dbReference>
<dbReference type="InterPro" id="IPR020556">
    <property type="entry name" value="Amidase_CS"/>
</dbReference>
<dbReference type="InterPro" id="IPR023631">
    <property type="entry name" value="Amidase_dom"/>
</dbReference>
<dbReference type="InterPro" id="IPR036928">
    <property type="entry name" value="AS_sf"/>
</dbReference>
<dbReference type="InterPro" id="IPR004412">
    <property type="entry name" value="GatA"/>
</dbReference>
<dbReference type="NCBIfam" id="TIGR00132">
    <property type="entry name" value="gatA"/>
    <property type="match status" value="1"/>
</dbReference>
<dbReference type="PANTHER" id="PTHR11895:SF151">
    <property type="entry name" value="GLUTAMYL-TRNA(GLN) AMIDOTRANSFERASE SUBUNIT A"/>
    <property type="match status" value="1"/>
</dbReference>
<dbReference type="PANTHER" id="PTHR11895">
    <property type="entry name" value="TRANSAMIDASE"/>
    <property type="match status" value="1"/>
</dbReference>
<dbReference type="Pfam" id="PF01425">
    <property type="entry name" value="Amidase"/>
    <property type="match status" value="1"/>
</dbReference>
<dbReference type="SUPFAM" id="SSF75304">
    <property type="entry name" value="Amidase signature (AS) enzymes"/>
    <property type="match status" value="1"/>
</dbReference>
<dbReference type="PROSITE" id="PS00571">
    <property type="entry name" value="AMIDASES"/>
    <property type="match status" value="1"/>
</dbReference>
<sequence length="499" mass="52761">MSALTDLTIAEARDGLRAKRFSARELTDAHLGAIEALNPRLNAYITVTPDQARAQAAAADRVLASGEAGALTGIPVASKDMFCSEGIRTTAGSRILENFVPPYESAVTERMLRDGAVILGKANLDEFAMGSANLTSAYGPVENPWKRHDDDAVLVPGGSSGGSAAAVAAHLALGATGTDTGGSIRQPASYCGIAGIKPTYGRCSRWGIVAYASSLDQAGPFARTVRDNAILLRSMAGHDPRDSTSAMREVPDFEAACQRGVKGLRIGLPREYVADGMSEEIRTLWQNGAAMLRAAGAEVVDVSLPHTKHALASYYIIAPAEASSNLARYDGVRFGHRSSDNRDLNDLYERSRAEGFGAEVKRRIMVGTYVLSAGYYDAYYLKAQKVRALIARDFAEAFRSVDALLTPTAPSAAFAQGETIDDPVAMYLNDVFTVPINLAGLPAMSIPAGLSTTGLPLGLQIIGRAFDEETVFAVSAALEQAAAFTHRPALRADTLNAGA</sequence>
<accession>Q0BTK2</accession>
<gene>
    <name evidence="1" type="primary">gatA</name>
    <name type="ordered locus">GbCGDNIH1_0952</name>
</gene>
<keyword id="KW-0067">ATP-binding</keyword>
<keyword id="KW-0436">Ligase</keyword>
<keyword id="KW-0547">Nucleotide-binding</keyword>
<keyword id="KW-0648">Protein biosynthesis</keyword>
<keyword id="KW-1185">Reference proteome</keyword>
<reference key="1">
    <citation type="journal article" date="2007" name="J. Bacteriol.">
        <title>Genome sequence analysis of the emerging human pathogenic acetic acid bacterium Granulibacter bethesdensis.</title>
        <authorList>
            <person name="Greenberg D.E."/>
            <person name="Porcella S.F."/>
            <person name="Zelazny A.M."/>
            <person name="Virtaneva K."/>
            <person name="Sturdevant D.E."/>
            <person name="Kupko J.J. III"/>
            <person name="Barbian K.D."/>
            <person name="Babar A."/>
            <person name="Dorward D.W."/>
            <person name="Holland S.M."/>
        </authorList>
    </citation>
    <scope>NUCLEOTIDE SEQUENCE [LARGE SCALE GENOMIC DNA]</scope>
    <source>
        <strain>ATCC BAA-1260 / CGDNIH1</strain>
    </source>
</reference>
<organism>
    <name type="scientific">Granulibacter bethesdensis (strain ATCC BAA-1260 / CGDNIH1)</name>
    <dbReference type="NCBI Taxonomy" id="391165"/>
    <lineage>
        <taxon>Bacteria</taxon>
        <taxon>Pseudomonadati</taxon>
        <taxon>Pseudomonadota</taxon>
        <taxon>Alphaproteobacteria</taxon>
        <taxon>Acetobacterales</taxon>
        <taxon>Acetobacteraceae</taxon>
        <taxon>Granulibacter</taxon>
    </lineage>
</organism>